<evidence type="ECO:0000255" key="1">
    <source>
        <dbReference type="HAMAP-Rule" id="MF_00651"/>
    </source>
</evidence>
<evidence type="ECO:0000256" key="2">
    <source>
        <dbReference type="SAM" id="MobiDB-lite"/>
    </source>
</evidence>
<name>YQGF_RHOCS</name>
<reference key="1">
    <citation type="submission" date="2007-03" db="EMBL/GenBank/DDBJ databases">
        <title>Genome sequence of Rhodospirillum centenum.</title>
        <authorList>
            <person name="Touchman J.W."/>
            <person name="Bauer C."/>
            <person name="Blankenship R.E."/>
        </authorList>
    </citation>
    <scope>NUCLEOTIDE SEQUENCE [LARGE SCALE GENOMIC DNA]</scope>
    <source>
        <strain>ATCC 51521 / SW</strain>
    </source>
</reference>
<sequence>MAIRNLMELKASLPRNGRLMGLDLGEKTIGLAVSDPGLSVASPVGTIRRTKFTQDAQELARAMRDRDVRALVVGLPVNMDGTEGPRCQSVREFSRLLLQRPQLFGFEPEIAFWDERLSTSAVERMMIGWDMTRKRRDEVVDKMAAAYILQGALDRLRQGDAAPGGSDDERDEDGDTDGEDGGGDGGGE</sequence>
<feature type="chain" id="PRO_1000131063" description="Putative pre-16S rRNA nuclease">
    <location>
        <begin position="1"/>
        <end position="188"/>
    </location>
</feature>
<feature type="region of interest" description="Disordered" evidence="2">
    <location>
        <begin position="156"/>
        <end position="188"/>
    </location>
</feature>
<feature type="compositionally biased region" description="Acidic residues" evidence="2">
    <location>
        <begin position="166"/>
        <end position="188"/>
    </location>
</feature>
<dbReference type="EC" id="3.1.-.-" evidence="1"/>
<dbReference type="EMBL" id="CP000613">
    <property type="protein sequence ID" value="ACI98922.1"/>
    <property type="molecule type" value="Genomic_DNA"/>
</dbReference>
<dbReference type="RefSeq" id="WP_012566708.1">
    <property type="nucleotide sequence ID" value="NC_011420.2"/>
</dbReference>
<dbReference type="SMR" id="B6IN25"/>
<dbReference type="STRING" id="414684.RC1_1518"/>
<dbReference type="KEGG" id="rce:RC1_1518"/>
<dbReference type="eggNOG" id="COG0816">
    <property type="taxonomic scope" value="Bacteria"/>
</dbReference>
<dbReference type="HOGENOM" id="CLU_098240_1_1_5"/>
<dbReference type="OrthoDB" id="9796140at2"/>
<dbReference type="Proteomes" id="UP000001591">
    <property type="component" value="Chromosome"/>
</dbReference>
<dbReference type="GO" id="GO:0005829">
    <property type="term" value="C:cytosol"/>
    <property type="evidence" value="ECO:0007669"/>
    <property type="project" value="TreeGrafter"/>
</dbReference>
<dbReference type="GO" id="GO:0004518">
    <property type="term" value="F:nuclease activity"/>
    <property type="evidence" value="ECO:0007669"/>
    <property type="project" value="UniProtKB-KW"/>
</dbReference>
<dbReference type="GO" id="GO:0000967">
    <property type="term" value="P:rRNA 5'-end processing"/>
    <property type="evidence" value="ECO:0007669"/>
    <property type="project" value="UniProtKB-UniRule"/>
</dbReference>
<dbReference type="CDD" id="cd16964">
    <property type="entry name" value="YqgF"/>
    <property type="match status" value="1"/>
</dbReference>
<dbReference type="Gene3D" id="3.30.420.140">
    <property type="entry name" value="YqgF/RNase H-like domain"/>
    <property type="match status" value="1"/>
</dbReference>
<dbReference type="HAMAP" id="MF_00651">
    <property type="entry name" value="Nuclease_YqgF"/>
    <property type="match status" value="1"/>
</dbReference>
<dbReference type="InterPro" id="IPR012337">
    <property type="entry name" value="RNaseH-like_sf"/>
</dbReference>
<dbReference type="InterPro" id="IPR005227">
    <property type="entry name" value="YqgF"/>
</dbReference>
<dbReference type="InterPro" id="IPR006641">
    <property type="entry name" value="YqgF/RNaseH-like_dom"/>
</dbReference>
<dbReference type="InterPro" id="IPR037027">
    <property type="entry name" value="YqgF/RNaseH-like_dom_sf"/>
</dbReference>
<dbReference type="NCBIfam" id="TIGR00250">
    <property type="entry name" value="RNAse_H_YqgF"/>
    <property type="match status" value="1"/>
</dbReference>
<dbReference type="PANTHER" id="PTHR33317">
    <property type="entry name" value="POLYNUCLEOTIDYL TRANSFERASE, RIBONUCLEASE H-LIKE SUPERFAMILY PROTEIN"/>
    <property type="match status" value="1"/>
</dbReference>
<dbReference type="PANTHER" id="PTHR33317:SF4">
    <property type="entry name" value="POLYNUCLEOTIDYL TRANSFERASE, RIBONUCLEASE H-LIKE SUPERFAMILY PROTEIN"/>
    <property type="match status" value="1"/>
</dbReference>
<dbReference type="Pfam" id="PF03652">
    <property type="entry name" value="RuvX"/>
    <property type="match status" value="1"/>
</dbReference>
<dbReference type="SMART" id="SM00732">
    <property type="entry name" value="YqgFc"/>
    <property type="match status" value="1"/>
</dbReference>
<dbReference type="SUPFAM" id="SSF53098">
    <property type="entry name" value="Ribonuclease H-like"/>
    <property type="match status" value="1"/>
</dbReference>
<organism>
    <name type="scientific">Rhodospirillum centenum (strain ATCC 51521 / SW)</name>
    <dbReference type="NCBI Taxonomy" id="414684"/>
    <lineage>
        <taxon>Bacteria</taxon>
        <taxon>Pseudomonadati</taxon>
        <taxon>Pseudomonadota</taxon>
        <taxon>Alphaproteobacteria</taxon>
        <taxon>Rhodospirillales</taxon>
        <taxon>Rhodospirillaceae</taxon>
        <taxon>Rhodospirillum</taxon>
    </lineage>
</organism>
<comment type="function">
    <text evidence="1">Could be a nuclease involved in processing of the 5'-end of pre-16S rRNA.</text>
</comment>
<comment type="subcellular location">
    <subcellularLocation>
        <location evidence="1">Cytoplasm</location>
    </subcellularLocation>
</comment>
<comment type="similarity">
    <text evidence="1">Belongs to the YqgF nuclease family.</text>
</comment>
<gene>
    <name type="ordered locus">RC1_1518</name>
</gene>
<protein>
    <recommendedName>
        <fullName evidence="1">Putative pre-16S rRNA nuclease</fullName>
        <ecNumber evidence="1">3.1.-.-</ecNumber>
    </recommendedName>
</protein>
<accession>B6IN25</accession>
<proteinExistence type="inferred from homology"/>
<keyword id="KW-0963">Cytoplasm</keyword>
<keyword id="KW-0378">Hydrolase</keyword>
<keyword id="KW-0540">Nuclease</keyword>
<keyword id="KW-1185">Reference proteome</keyword>
<keyword id="KW-0690">Ribosome biogenesis</keyword>